<gene>
    <name type="primary">metX</name>
    <name type="ordered locus">PD_1484</name>
</gene>
<accession>Q87BG9</accession>
<comment type="function">
    <text evidence="1">Transfers a succinyl group from succinyl-CoA to L-serine, forming succinyl-L-serine.</text>
</comment>
<comment type="catalytic activity">
    <reaction evidence="1">
        <text>succinyl-CoA + L-serine = O-succinyl-L-serine + CoA</text>
        <dbReference type="Rhea" id="RHEA:52820"/>
        <dbReference type="ChEBI" id="CHEBI:33384"/>
        <dbReference type="ChEBI" id="CHEBI:57287"/>
        <dbReference type="ChEBI" id="CHEBI:57292"/>
        <dbReference type="ChEBI" id="CHEBI:136856"/>
    </reaction>
</comment>
<comment type="pathway">
    <text evidence="1">Amino-acid biosynthesis; L-cysteine biosynthesis; L-cysteine from L-serine: step 1/2.</text>
</comment>
<comment type="subunit">
    <text evidence="1">Homodimer.</text>
</comment>
<comment type="subcellular location">
    <subcellularLocation>
        <location evidence="1">Cytoplasm</location>
    </subcellularLocation>
</comment>
<comment type="similarity">
    <text evidence="1">Belongs to the AB hydrolase superfamily. MetX family.</text>
</comment>
<name>SST_XYLFT</name>
<sequence length="370" mass="40724">MTEFIPPGSLFHALSSPFAMKRGGQLHHARIAYETWGRLNAGATNAILIMPGLSPNAHAAHHDSNAEPGWWESMLGPGKPIDTDRWFVICVNSLGSCKGSTGPASYNPITQAMYRLDFPALSIEDGANAAIEVVHALGIKQLASLIGNSMGGMTALAILLLHPDIARSHINISGSAQALPFSIAIRSLQREAIRLDPHWKQGHYDDTHYPESGLRIARKLGVITYRSALEWDGRFGRVRLDSDQTNDTPFGLEFQIENYLESHAHRFVHTFDPNCYLYLSRSMDWFDVAEYANGDIIAGLARIRIQRALAIGSHTDILFPIQQQQQIAEGLRRGGTHATFLGLDSPQGHDAFLVDIAGFGPPVKEFLDEL</sequence>
<proteinExistence type="inferred from homology"/>
<reference key="1">
    <citation type="journal article" date="2003" name="J. Bacteriol.">
        <title>Comparative analyses of the complete genome sequences of Pierce's disease and citrus variegated chlorosis strains of Xylella fastidiosa.</title>
        <authorList>
            <person name="Van Sluys M.A."/>
            <person name="de Oliveira M.C."/>
            <person name="Monteiro-Vitorello C.B."/>
            <person name="Miyaki C.Y."/>
            <person name="Furlan L.R."/>
            <person name="Camargo L.E.A."/>
            <person name="da Silva A.C.R."/>
            <person name="Moon D.H."/>
            <person name="Takita M.A."/>
            <person name="Lemos E.G.M."/>
            <person name="Machado M.A."/>
            <person name="Ferro M.I.T."/>
            <person name="da Silva F.R."/>
            <person name="Goldman M.H.S."/>
            <person name="Goldman G.H."/>
            <person name="Lemos M.V.F."/>
            <person name="El-Dorry H."/>
            <person name="Tsai S.M."/>
            <person name="Carrer H."/>
            <person name="Carraro D.M."/>
            <person name="de Oliveira R.C."/>
            <person name="Nunes L.R."/>
            <person name="Siqueira W.J."/>
            <person name="Coutinho L.L."/>
            <person name="Kimura E.T."/>
            <person name="Ferro E.S."/>
            <person name="Harakava R."/>
            <person name="Kuramae E.E."/>
            <person name="Marino C.L."/>
            <person name="Giglioti E."/>
            <person name="Abreu I.L."/>
            <person name="Alves L.M.C."/>
            <person name="do Amaral A.M."/>
            <person name="Baia G.S."/>
            <person name="Blanco S.R."/>
            <person name="Brito M.S."/>
            <person name="Cannavan F.S."/>
            <person name="Celestino A.V."/>
            <person name="da Cunha A.F."/>
            <person name="Fenille R.C."/>
            <person name="Ferro J.A."/>
            <person name="Formighieri E.F."/>
            <person name="Kishi L.T."/>
            <person name="Leoni S.G."/>
            <person name="Oliveira A.R."/>
            <person name="Rosa V.E. Jr."/>
            <person name="Sassaki F.T."/>
            <person name="Sena J.A.D."/>
            <person name="de Souza A.A."/>
            <person name="Truffi D."/>
            <person name="Tsukumo F."/>
            <person name="Yanai G.M."/>
            <person name="Zaros L.G."/>
            <person name="Civerolo E.L."/>
            <person name="Simpson A.J.G."/>
            <person name="Almeida N.F. Jr."/>
            <person name="Setubal J.C."/>
            <person name="Kitajima J.P."/>
        </authorList>
    </citation>
    <scope>NUCLEOTIDE SEQUENCE [LARGE SCALE GENOMIC DNA]</scope>
    <source>
        <strain>Temecula1 / ATCC 700964</strain>
    </source>
</reference>
<protein>
    <recommendedName>
        <fullName evidence="1">Serine O-succinyltransferase</fullName>
        <shortName evidence="1">SST</shortName>
        <ecNumber evidence="1">2.3.1.-</ecNumber>
    </recommendedName>
</protein>
<feature type="chain" id="PRO_0000155749" description="Serine O-succinyltransferase">
    <location>
        <begin position="1"/>
        <end position="370"/>
    </location>
</feature>
<feature type="domain" description="AB hydrolase-1" evidence="1">
    <location>
        <begin position="45"/>
        <end position="354"/>
    </location>
</feature>
<feature type="region of interest" description="Important for substrate specificity" evidence="1">
    <location>
        <begin position="52"/>
        <end position="55"/>
    </location>
</feature>
<feature type="active site" description="Nucleophile" evidence="1">
    <location>
        <position position="149"/>
    </location>
</feature>
<feature type="active site" evidence="1">
    <location>
        <position position="316"/>
    </location>
</feature>
<feature type="active site" evidence="1">
    <location>
        <position position="349"/>
    </location>
</feature>
<feature type="binding site" evidence="1">
    <location>
        <position position="218"/>
    </location>
    <ligand>
        <name>substrate</name>
    </ligand>
</feature>
<feature type="binding site" evidence="1">
    <location>
        <position position="350"/>
    </location>
    <ligand>
        <name>substrate</name>
    </ligand>
</feature>
<feature type="site" description="Important for acyl-CoA specificity" evidence="1">
    <location>
        <position position="186"/>
    </location>
</feature>
<keyword id="KW-0012">Acyltransferase</keyword>
<keyword id="KW-0028">Amino-acid biosynthesis</keyword>
<keyword id="KW-0198">Cysteine biosynthesis</keyword>
<keyword id="KW-0963">Cytoplasm</keyword>
<keyword id="KW-1185">Reference proteome</keyword>
<keyword id="KW-0808">Transferase</keyword>
<dbReference type="EC" id="2.3.1.-" evidence="1"/>
<dbReference type="EMBL" id="AE009442">
    <property type="protein sequence ID" value="AAO29328.1"/>
    <property type="molecule type" value="Genomic_DNA"/>
</dbReference>
<dbReference type="RefSeq" id="WP_004088494.1">
    <property type="nucleotide sequence ID" value="NC_004556.1"/>
</dbReference>
<dbReference type="SMR" id="Q87BG9"/>
<dbReference type="ESTHER" id="xylfa-metx">
    <property type="family name" value="Homoserine_transacetylase"/>
</dbReference>
<dbReference type="KEGG" id="xft:PD_1484"/>
<dbReference type="HOGENOM" id="CLU_028760_1_2_6"/>
<dbReference type="UniPathway" id="UPA00136">
    <property type="reaction ID" value="UER00199"/>
</dbReference>
<dbReference type="Proteomes" id="UP000002516">
    <property type="component" value="Chromosome"/>
</dbReference>
<dbReference type="GO" id="GO:0005737">
    <property type="term" value="C:cytoplasm"/>
    <property type="evidence" value="ECO:0007669"/>
    <property type="project" value="UniProtKB-SubCell"/>
</dbReference>
<dbReference type="GO" id="GO:0004414">
    <property type="term" value="F:homoserine O-acetyltransferase activity"/>
    <property type="evidence" value="ECO:0007669"/>
    <property type="project" value="TreeGrafter"/>
</dbReference>
<dbReference type="GO" id="GO:0160210">
    <property type="term" value="F:L-serine O-succinyltransferase activity"/>
    <property type="evidence" value="ECO:0007669"/>
    <property type="project" value="RHEA"/>
</dbReference>
<dbReference type="GO" id="GO:0006535">
    <property type="term" value="P:cysteine biosynthetic process from serine"/>
    <property type="evidence" value="ECO:0007669"/>
    <property type="project" value="UniProtKB-UniRule"/>
</dbReference>
<dbReference type="GO" id="GO:0009092">
    <property type="term" value="P:homoserine metabolic process"/>
    <property type="evidence" value="ECO:0007669"/>
    <property type="project" value="TreeGrafter"/>
</dbReference>
<dbReference type="GO" id="GO:0009086">
    <property type="term" value="P:methionine biosynthetic process"/>
    <property type="evidence" value="ECO:0007669"/>
    <property type="project" value="TreeGrafter"/>
</dbReference>
<dbReference type="Gene3D" id="1.10.1740.110">
    <property type="match status" value="1"/>
</dbReference>
<dbReference type="Gene3D" id="3.40.50.1820">
    <property type="entry name" value="alpha/beta hydrolase"/>
    <property type="match status" value="1"/>
</dbReference>
<dbReference type="HAMAP" id="MF_00296">
    <property type="entry name" value="MetX_acyltransf"/>
    <property type="match status" value="1"/>
</dbReference>
<dbReference type="InterPro" id="IPR000073">
    <property type="entry name" value="AB_hydrolase_1"/>
</dbReference>
<dbReference type="InterPro" id="IPR029058">
    <property type="entry name" value="AB_hydrolase_fold"/>
</dbReference>
<dbReference type="InterPro" id="IPR008220">
    <property type="entry name" value="HAT_MetX-like"/>
</dbReference>
<dbReference type="NCBIfam" id="TIGR01392">
    <property type="entry name" value="homoserO_Ac_trn"/>
    <property type="match status" value="1"/>
</dbReference>
<dbReference type="NCBIfam" id="NF001209">
    <property type="entry name" value="PRK00175.1"/>
    <property type="match status" value="1"/>
</dbReference>
<dbReference type="PANTHER" id="PTHR32268">
    <property type="entry name" value="HOMOSERINE O-ACETYLTRANSFERASE"/>
    <property type="match status" value="1"/>
</dbReference>
<dbReference type="PANTHER" id="PTHR32268:SF11">
    <property type="entry name" value="HOMOSERINE O-ACETYLTRANSFERASE"/>
    <property type="match status" value="1"/>
</dbReference>
<dbReference type="Pfam" id="PF00561">
    <property type="entry name" value="Abhydrolase_1"/>
    <property type="match status" value="1"/>
</dbReference>
<dbReference type="PIRSF" id="PIRSF000443">
    <property type="entry name" value="Homoser_Ac_trans"/>
    <property type="match status" value="1"/>
</dbReference>
<dbReference type="SUPFAM" id="SSF53474">
    <property type="entry name" value="alpha/beta-Hydrolases"/>
    <property type="match status" value="1"/>
</dbReference>
<evidence type="ECO:0000255" key="1">
    <source>
        <dbReference type="HAMAP-Rule" id="MF_00296"/>
    </source>
</evidence>
<organism>
    <name type="scientific">Xylella fastidiosa (strain Temecula1 / ATCC 700964)</name>
    <dbReference type="NCBI Taxonomy" id="183190"/>
    <lineage>
        <taxon>Bacteria</taxon>
        <taxon>Pseudomonadati</taxon>
        <taxon>Pseudomonadota</taxon>
        <taxon>Gammaproteobacteria</taxon>
        <taxon>Lysobacterales</taxon>
        <taxon>Lysobacteraceae</taxon>
        <taxon>Xylella</taxon>
    </lineage>
</organism>